<name>ABDH_ECOLC</name>
<organism>
    <name type="scientific">Escherichia coli (strain ATCC 8739 / DSM 1576 / NBRC 3972 / NCIMB 8545 / WDCM 00012 / Crooks)</name>
    <dbReference type="NCBI Taxonomy" id="481805"/>
    <lineage>
        <taxon>Bacteria</taxon>
        <taxon>Pseudomonadati</taxon>
        <taxon>Pseudomonadota</taxon>
        <taxon>Gammaproteobacteria</taxon>
        <taxon>Enterobacterales</taxon>
        <taxon>Enterobacteriaceae</taxon>
        <taxon>Escherichia</taxon>
    </lineage>
</organism>
<reference key="1">
    <citation type="submission" date="2008-02" db="EMBL/GenBank/DDBJ databases">
        <title>Complete sequence of Escherichia coli C str. ATCC 8739.</title>
        <authorList>
            <person name="Copeland A."/>
            <person name="Lucas S."/>
            <person name="Lapidus A."/>
            <person name="Glavina del Rio T."/>
            <person name="Dalin E."/>
            <person name="Tice H."/>
            <person name="Bruce D."/>
            <person name="Goodwin L."/>
            <person name="Pitluck S."/>
            <person name="Kiss H."/>
            <person name="Brettin T."/>
            <person name="Detter J.C."/>
            <person name="Han C."/>
            <person name="Kuske C.R."/>
            <person name="Schmutz J."/>
            <person name="Larimer F."/>
            <person name="Land M."/>
            <person name="Hauser L."/>
            <person name="Kyrpides N."/>
            <person name="Mikhailova N."/>
            <person name="Ingram L."/>
            <person name="Richardson P."/>
        </authorList>
    </citation>
    <scope>NUCLEOTIDE SEQUENCE [LARGE SCALE GENOMIC DNA]</scope>
    <source>
        <strain>ATCC 8739 / DSM 1576 / NBRC 3972 / NCIMB 8545 / WDCM 00012 / Crooks</strain>
    </source>
</reference>
<protein>
    <recommendedName>
        <fullName evidence="1">Gamma-aminobutyraldehyde dehydrogenase</fullName>
        <shortName evidence="1">ABALDH</shortName>
        <ecNumber evidence="1">1.2.1.19</ecNumber>
    </recommendedName>
    <alternativeName>
        <fullName evidence="1">1-pyrroline dehydrogenase</fullName>
    </alternativeName>
    <alternativeName>
        <fullName evidence="1">4-aminobutanal dehydrogenase</fullName>
    </alternativeName>
    <alternativeName>
        <fullName evidence="1">5-aminopentanal dehydrogenase</fullName>
        <ecNumber evidence="1">1.2.1.-</ecNumber>
    </alternativeName>
</protein>
<keyword id="KW-0520">NAD</keyword>
<keyword id="KW-0560">Oxidoreductase</keyword>
<gene>
    <name evidence="1" type="primary">patD</name>
    <name type="ordered locus">EcolC_2215</name>
</gene>
<comment type="function">
    <text evidence="1">Catalyzes the oxidation 4-aminobutanal (gamma-aminobutyraldehyde) to 4-aminobutanoate (gamma-aminobutyrate or GABA). This is the second step in one of two pathways for putrescine degradation, where putrescine is converted into 4-aminobutanoate via 4-aminobutanal. Also functions as a 5-aminopentanal dehydrogenase in a a L-lysine degradation pathway to succinate that proceeds via cadaverine, glutarate and L-2-hydroxyglutarate.</text>
</comment>
<comment type="catalytic activity">
    <reaction evidence="1">
        <text>4-aminobutanal + NAD(+) + H2O = 4-aminobutanoate + NADH + 2 H(+)</text>
        <dbReference type="Rhea" id="RHEA:19105"/>
        <dbReference type="ChEBI" id="CHEBI:15377"/>
        <dbReference type="ChEBI" id="CHEBI:15378"/>
        <dbReference type="ChEBI" id="CHEBI:57540"/>
        <dbReference type="ChEBI" id="CHEBI:57945"/>
        <dbReference type="ChEBI" id="CHEBI:58264"/>
        <dbReference type="ChEBI" id="CHEBI:59888"/>
        <dbReference type="EC" id="1.2.1.19"/>
    </reaction>
    <physiologicalReaction direction="left-to-right" evidence="1">
        <dbReference type="Rhea" id="RHEA:19106"/>
    </physiologicalReaction>
</comment>
<comment type="catalytic activity">
    <reaction evidence="1">
        <text>5-aminopentanal + NAD(+) + H2O = 5-aminopentanoate + NADH + 2 H(+)</text>
        <dbReference type="Rhea" id="RHEA:61632"/>
        <dbReference type="ChEBI" id="CHEBI:15377"/>
        <dbReference type="ChEBI" id="CHEBI:15378"/>
        <dbReference type="ChEBI" id="CHEBI:57540"/>
        <dbReference type="ChEBI" id="CHEBI:57945"/>
        <dbReference type="ChEBI" id="CHEBI:144896"/>
        <dbReference type="ChEBI" id="CHEBI:356010"/>
    </reaction>
    <physiologicalReaction direction="left-to-right" evidence="1">
        <dbReference type="Rhea" id="RHEA:61633"/>
    </physiologicalReaction>
</comment>
<comment type="pathway">
    <text evidence="1">Amine and polyamine degradation; putrescine degradation; 4-aminobutanoate from 4-aminobutanal: step 1/1.</text>
</comment>
<comment type="pathway">
    <text evidence="1">Amino-acid degradation.</text>
</comment>
<comment type="subunit">
    <text evidence="1">Homotetramer.</text>
</comment>
<comment type="miscellaneous">
    <text evidence="1">4-aminobutanal can spontaneously cyclize to 1-pyrroline, and 5-aminopentanal to 1-piperideine.</text>
</comment>
<comment type="similarity">
    <text evidence="1">Belongs to the aldehyde dehydrogenase family. Gamma-aminobutyraldehyde dehydrogenase subfamily.</text>
</comment>
<feature type="chain" id="PRO_1000085861" description="Gamma-aminobutyraldehyde dehydrogenase">
    <location>
        <begin position="1"/>
        <end position="474"/>
    </location>
</feature>
<feature type="active site" evidence="1">
    <location>
        <position position="246"/>
    </location>
</feature>
<feature type="active site" description="Nucleophile" evidence="1">
    <location>
        <position position="280"/>
    </location>
</feature>
<feature type="binding site" evidence="1">
    <location>
        <begin position="146"/>
        <end position="148"/>
    </location>
    <ligand>
        <name>NAD(+)</name>
        <dbReference type="ChEBI" id="CHEBI:57540"/>
    </ligand>
</feature>
<feature type="binding site" evidence="1">
    <location>
        <begin position="172"/>
        <end position="175"/>
    </location>
    <ligand>
        <name>NAD(+)</name>
        <dbReference type="ChEBI" id="CHEBI:57540"/>
    </ligand>
</feature>
<feature type="binding site" evidence="1">
    <location>
        <position position="209"/>
    </location>
    <ligand>
        <name>NAD(+)</name>
        <dbReference type="ChEBI" id="CHEBI:57540"/>
    </ligand>
</feature>
<feature type="binding site" evidence="1">
    <location>
        <begin position="225"/>
        <end position="228"/>
    </location>
    <ligand>
        <name>NAD(+)</name>
        <dbReference type="ChEBI" id="CHEBI:57540"/>
    </ligand>
</feature>
<feature type="binding site" evidence="1">
    <location>
        <position position="280"/>
    </location>
    <ligand>
        <name>NAD(+)</name>
        <dbReference type="ChEBI" id="CHEBI:57540"/>
    </ligand>
</feature>
<sequence length="474" mass="50876">MQHKLLINGELVSGEGEKQPVYNPATGDVLLEIAEASAEQVDAAVRAADAAFAEWGQTTPKVRAECLLKLADVIEENGQVFAELESRNCGKPLHSAFNDEIPAIVDVFRFFAGAARCLNGLAAGEYLEGHTSMIRRDPLGVVASIAPWNYPLMMAAWKLAPALAAGNCVVLKPSEITPLTALKLAELAKDIFPAGVINILFGRGKTVGDPLTGHPKVRMVSLTGSIATGEHIISHTASSIKRTHMELGGKAPVIVFDDADIEAVVEGVRTFGYYNAGQDCTAACRIYAQKGIYDTLVEKLGAAVATLKSGAPDDESTELGPLSSLAHLERVSKAVEEAKATGHIKVITGGEKRKGNGYYYAPTLLAGALQDDAIVQKEVFGPVVSVTLFDNEEQVVNWANDSQYGLASSVWTKDVGRAHRVSARLQYGCTWVNTHFMLVSEMPHGGQKLSGYGKDMSLYGLEDYTVVRHVMVKH</sequence>
<dbReference type="EC" id="1.2.1.19" evidence="1"/>
<dbReference type="EC" id="1.2.1.-" evidence="1"/>
<dbReference type="EMBL" id="CP000946">
    <property type="protein sequence ID" value="ACA77853.1"/>
    <property type="molecule type" value="Genomic_DNA"/>
</dbReference>
<dbReference type="RefSeq" id="WP_001163874.1">
    <property type="nucleotide sequence ID" value="NZ_MTFT01000039.1"/>
</dbReference>
<dbReference type="SMR" id="B1IS15"/>
<dbReference type="KEGG" id="ecl:EcolC_2215"/>
<dbReference type="HOGENOM" id="CLU_005391_0_0_6"/>
<dbReference type="UniPathway" id="UPA00188">
    <property type="reaction ID" value="UER00292"/>
</dbReference>
<dbReference type="GO" id="GO:0019145">
    <property type="term" value="F:aminobutyraldehyde dehydrogenase (NAD+) activity"/>
    <property type="evidence" value="ECO:0007669"/>
    <property type="project" value="UniProtKB-UniRule"/>
</dbReference>
<dbReference type="GO" id="GO:0051287">
    <property type="term" value="F:NAD binding"/>
    <property type="evidence" value="ECO:0007669"/>
    <property type="project" value="UniProtKB-UniRule"/>
</dbReference>
<dbReference type="GO" id="GO:0019477">
    <property type="term" value="P:L-lysine catabolic process"/>
    <property type="evidence" value="ECO:0007669"/>
    <property type="project" value="UniProtKB-UniRule"/>
</dbReference>
<dbReference type="GO" id="GO:0009447">
    <property type="term" value="P:putrescine catabolic process"/>
    <property type="evidence" value="ECO:0007669"/>
    <property type="project" value="UniProtKB-UniRule"/>
</dbReference>
<dbReference type="CDD" id="cd07092">
    <property type="entry name" value="ALDH_ABALDH-YdcW"/>
    <property type="match status" value="1"/>
</dbReference>
<dbReference type="FunFam" id="3.40.605.10:FF:000001">
    <property type="entry name" value="Aldehyde dehydrogenase 1"/>
    <property type="match status" value="1"/>
</dbReference>
<dbReference type="FunFam" id="3.40.309.10:FF:000010">
    <property type="entry name" value="Gamma-aminobutyraldehyde dehydrogenase"/>
    <property type="match status" value="1"/>
</dbReference>
<dbReference type="Gene3D" id="3.40.605.10">
    <property type="entry name" value="Aldehyde Dehydrogenase, Chain A, domain 1"/>
    <property type="match status" value="1"/>
</dbReference>
<dbReference type="Gene3D" id="3.40.309.10">
    <property type="entry name" value="Aldehyde Dehydrogenase, Chain A, domain 2"/>
    <property type="match status" value="1"/>
</dbReference>
<dbReference type="HAMAP" id="MF_01275">
    <property type="entry name" value="Aldedh_Prr"/>
    <property type="match status" value="1"/>
</dbReference>
<dbReference type="InterPro" id="IPR016161">
    <property type="entry name" value="Ald_DH/histidinol_DH"/>
</dbReference>
<dbReference type="InterPro" id="IPR016163">
    <property type="entry name" value="Ald_DH_C"/>
</dbReference>
<dbReference type="InterPro" id="IPR029510">
    <property type="entry name" value="Ald_DH_CS_GLU"/>
</dbReference>
<dbReference type="InterPro" id="IPR016162">
    <property type="entry name" value="Ald_DH_N"/>
</dbReference>
<dbReference type="InterPro" id="IPR015590">
    <property type="entry name" value="Aldehyde_DH_dom"/>
</dbReference>
<dbReference type="InterPro" id="IPR015657">
    <property type="entry name" value="Aminobutyraldehyde_DH"/>
</dbReference>
<dbReference type="InterPro" id="IPR017749">
    <property type="entry name" value="PatD"/>
</dbReference>
<dbReference type="NCBIfam" id="TIGR03374">
    <property type="entry name" value="ABALDH"/>
    <property type="match status" value="1"/>
</dbReference>
<dbReference type="NCBIfam" id="NF010000">
    <property type="entry name" value="PRK13473.1"/>
    <property type="match status" value="1"/>
</dbReference>
<dbReference type="PANTHER" id="PTHR11699">
    <property type="entry name" value="ALDEHYDE DEHYDROGENASE-RELATED"/>
    <property type="match status" value="1"/>
</dbReference>
<dbReference type="Pfam" id="PF00171">
    <property type="entry name" value="Aldedh"/>
    <property type="match status" value="1"/>
</dbReference>
<dbReference type="SUPFAM" id="SSF53720">
    <property type="entry name" value="ALDH-like"/>
    <property type="match status" value="1"/>
</dbReference>
<dbReference type="PROSITE" id="PS00687">
    <property type="entry name" value="ALDEHYDE_DEHYDR_GLU"/>
    <property type="match status" value="1"/>
</dbReference>
<evidence type="ECO:0000255" key="1">
    <source>
        <dbReference type="HAMAP-Rule" id="MF_01275"/>
    </source>
</evidence>
<proteinExistence type="inferred from homology"/>
<accession>B1IS15</accession>